<gene>
    <name evidence="5" type="primary">ACBP3</name>
    <name evidence="9" type="ordered locus">Os03g0576600</name>
    <name evidence="8" type="ordered locus">LOC_Os03g37960</name>
    <name evidence="7" type="ORF">OSJNBa0008D12.7</name>
</gene>
<evidence type="ECO:0000250" key="1">
    <source>
        <dbReference type="UniProtKB" id="P07107"/>
    </source>
</evidence>
<evidence type="ECO:0000255" key="2">
    <source>
        <dbReference type="PROSITE-ProRule" id="PRU00573"/>
    </source>
</evidence>
<evidence type="ECO:0000269" key="3">
    <source>
    </source>
</evidence>
<evidence type="ECO:0000269" key="4">
    <source>
    </source>
</evidence>
<evidence type="ECO:0000303" key="5">
    <source>
    </source>
</evidence>
<evidence type="ECO:0000305" key="6"/>
<evidence type="ECO:0000312" key="7">
    <source>
        <dbReference type="EMBL" id="AAR10857.1"/>
    </source>
</evidence>
<evidence type="ECO:0000312" key="8">
    <source>
        <dbReference type="EMBL" id="ABF97253.1"/>
    </source>
</evidence>
<evidence type="ECO:0000312" key="9">
    <source>
        <dbReference type="EMBL" id="BAS85026.1"/>
    </source>
</evidence>
<reference key="1">
    <citation type="journal article" date="2005" name="Genome Res.">
        <title>Sequence, annotation, and analysis of synteny between rice chromosome 3 and diverged grass species.</title>
        <authorList>
            <consortium name="The rice chromosome 3 sequencing consortium"/>
            <person name="Buell C.R."/>
            <person name="Yuan Q."/>
            <person name="Ouyang S."/>
            <person name="Liu J."/>
            <person name="Zhu W."/>
            <person name="Wang A."/>
            <person name="Maiti R."/>
            <person name="Haas B."/>
            <person name="Wortman J."/>
            <person name="Pertea M."/>
            <person name="Jones K.M."/>
            <person name="Kim M."/>
            <person name="Overton L."/>
            <person name="Tsitrin T."/>
            <person name="Fadrosh D."/>
            <person name="Bera J."/>
            <person name="Weaver B."/>
            <person name="Jin S."/>
            <person name="Johri S."/>
            <person name="Reardon M."/>
            <person name="Webb K."/>
            <person name="Hill J."/>
            <person name="Moffat K."/>
            <person name="Tallon L."/>
            <person name="Van Aken S."/>
            <person name="Lewis M."/>
            <person name="Utterback T."/>
            <person name="Feldblyum T."/>
            <person name="Zismann V."/>
            <person name="Iobst S."/>
            <person name="Hsiao J."/>
            <person name="de Vazeille A.R."/>
            <person name="Salzberg S.L."/>
            <person name="White O."/>
            <person name="Fraser C.M."/>
            <person name="Yu Y."/>
            <person name="Kim H."/>
            <person name="Rambo T."/>
            <person name="Currie J."/>
            <person name="Collura K."/>
            <person name="Kernodle-Thompson S."/>
            <person name="Wei F."/>
            <person name="Kudrna K."/>
            <person name="Ammiraju J.S.S."/>
            <person name="Luo M."/>
            <person name="Goicoechea J.L."/>
            <person name="Wing R.A."/>
            <person name="Henry D."/>
            <person name="Oates R."/>
            <person name="Palmer M."/>
            <person name="Pries G."/>
            <person name="Saski C."/>
            <person name="Simmons J."/>
            <person name="Soderlund C."/>
            <person name="Nelson W."/>
            <person name="de la Bastide M."/>
            <person name="Spiegel L."/>
            <person name="Nascimento L."/>
            <person name="Huang E."/>
            <person name="Preston R."/>
            <person name="Zutavern T."/>
            <person name="Palmer L."/>
            <person name="O'Shaughnessy A."/>
            <person name="Dike S."/>
            <person name="McCombie W.R."/>
            <person name="Minx P."/>
            <person name="Cordum H."/>
            <person name="Wilson R."/>
            <person name="Jin W."/>
            <person name="Lee H.R."/>
            <person name="Jiang J."/>
            <person name="Jackson S."/>
        </authorList>
    </citation>
    <scope>NUCLEOTIDE SEQUENCE [LARGE SCALE GENOMIC DNA]</scope>
    <source>
        <strain>cv. Nipponbare</strain>
    </source>
</reference>
<reference key="2">
    <citation type="journal article" date="2005" name="Nature">
        <title>The map-based sequence of the rice genome.</title>
        <authorList>
            <consortium name="International rice genome sequencing project (IRGSP)"/>
        </authorList>
    </citation>
    <scope>NUCLEOTIDE SEQUENCE [LARGE SCALE GENOMIC DNA]</scope>
    <source>
        <strain>cv. Nipponbare</strain>
    </source>
</reference>
<reference key="3">
    <citation type="journal article" date="2008" name="Nucleic Acids Res.">
        <title>The rice annotation project database (RAP-DB): 2008 update.</title>
        <authorList>
            <consortium name="The rice annotation project (RAP)"/>
        </authorList>
    </citation>
    <scope>GENOME REANNOTATION</scope>
    <source>
        <strain>cv. Nipponbare</strain>
    </source>
</reference>
<reference key="4">
    <citation type="journal article" date="2013" name="Rice">
        <title>Improvement of the Oryza sativa Nipponbare reference genome using next generation sequence and optical map data.</title>
        <authorList>
            <person name="Kawahara Y."/>
            <person name="de la Bastide M."/>
            <person name="Hamilton J.P."/>
            <person name="Kanamori H."/>
            <person name="McCombie W.R."/>
            <person name="Ouyang S."/>
            <person name="Schwartz D.C."/>
            <person name="Tanaka T."/>
            <person name="Wu J."/>
            <person name="Zhou S."/>
            <person name="Childs K.L."/>
            <person name="Davidson R.M."/>
            <person name="Lin H."/>
            <person name="Quesada-Ocampo L."/>
            <person name="Vaillancourt B."/>
            <person name="Sakai H."/>
            <person name="Lee S.S."/>
            <person name="Kim J."/>
            <person name="Numa H."/>
            <person name="Itoh T."/>
            <person name="Buell C.R."/>
            <person name="Matsumoto T."/>
        </authorList>
    </citation>
    <scope>GENOME REANNOTATION</scope>
    <source>
        <strain>cv. Nipponbare</strain>
    </source>
</reference>
<reference key="5">
    <citation type="journal article" date="2011" name="New Phytol.">
        <title>The rice acyl-CoA-binding protein gene family: phylogeny, expression and functional analysis.</title>
        <authorList>
            <person name="Meng W."/>
            <person name="Su Y.C."/>
            <person name="Saunders R.M."/>
            <person name="Chye M.L."/>
        </authorList>
    </citation>
    <scope>FUNCTION</scope>
    <scope>TISSUE SPECIFICITY</scope>
    <scope>INDUCTION</scope>
    <scope>GENE FAMILY</scope>
    <scope>NOMENCLATURE</scope>
</reference>
<reference key="6">
    <citation type="journal article" date="2014" name="New Phytol.">
        <title>Subcellular localization of rice acyl-CoA-binding proteins (ACBPs) indicates that OsACBP6::GFP is targeted to the peroxisomes.</title>
        <authorList>
            <person name="Meng W."/>
            <person name="Hsiao A.S."/>
            <person name="Gao C."/>
            <person name="Jiang L."/>
            <person name="Chye M.L."/>
        </authorList>
    </citation>
    <scope>FUNCTION</scope>
    <scope>SUBCELLULAR LOCATION</scope>
</reference>
<name>ACBP3_ORYSJ</name>
<dbReference type="EMBL" id="AC146468">
    <property type="protein sequence ID" value="AAR10857.1"/>
    <property type="molecule type" value="Genomic_DNA"/>
</dbReference>
<dbReference type="EMBL" id="DP000009">
    <property type="protein sequence ID" value="ABF97253.1"/>
    <property type="molecule type" value="Genomic_DNA"/>
</dbReference>
<dbReference type="EMBL" id="AP008209">
    <property type="protein sequence ID" value="BAF12450.2"/>
    <property type="status" value="ALT_SEQ"/>
    <property type="molecule type" value="Genomic_DNA"/>
</dbReference>
<dbReference type="EMBL" id="AP014959">
    <property type="protein sequence ID" value="BAS85026.1"/>
    <property type="molecule type" value="Genomic_DNA"/>
</dbReference>
<dbReference type="SMR" id="Q75G87"/>
<dbReference type="FunCoup" id="Q75G87">
    <property type="interactions" value="2045"/>
</dbReference>
<dbReference type="STRING" id="39947.Q75G87"/>
<dbReference type="PaxDb" id="39947-Q75G87"/>
<dbReference type="EnsemblPlants" id="Os03t0576600-01">
    <property type="protein sequence ID" value="Os03t0576600-01"/>
    <property type="gene ID" value="Os03g0576600"/>
</dbReference>
<dbReference type="Gramene" id="Os03t0576600-01">
    <property type="protein sequence ID" value="Os03t0576600-01"/>
    <property type="gene ID" value="Os03g0576600"/>
</dbReference>
<dbReference type="KEGG" id="dosa:Os03g0576600"/>
<dbReference type="eggNOG" id="KOG0817">
    <property type="taxonomic scope" value="Eukaryota"/>
</dbReference>
<dbReference type="HOGENOM" id="CLU_1698264_0_0_1"/>
<dbReference type="InParanoid" id="Q75G87"/>
<dbReference type="OMA" id="NIFECHI"/>
<dbReference type="Proteomes" id="UP000000763">
    <property type="component" value="Chromosome 3"/>
</dbReference>
<dbReference type="Proteomes" id="UP000059680">
    <property type="component" value="Chromosome 3"/>
</dbReference>
<dbReference type="GO" id="GO:0005829">
    <property type="term" value="C:cytosol"/>
    <property type="evidence" value="ECO:0007669"/>
    <property type="project" value="UniProtKB-SubCell"/>
</dbReference>
<dbReference type="GO" id="GO:0000062">
    <property type="term" value="F:fatty-acyl-CoA binding"/>
    <property type="evidence" value="ECO:0000318"/>
    <property type="project" value="GO_Central"/>
</dbReference>
<dbReference type="GO" id="GO:0006631">
    <property type="term" value="P:fatty acid metabolic process"/>
    <property type="evidence" value="ECO:0000318"/>
    <property type="project" value="GO_Central"/>
</dbReference>
<dbReference type="CDD" id="cd00435">
    <property type="entry name" value="ACBP"/>
    <property type="match status" value="1"/>
</dbReference>
<dbReference type="FunFam" id="1.20.80.10:FF:000010">
    <property type="entry name" value="Acyl-CoA-binding domain-containing protein 5"/>
    <property type="match status" value="1"/>
</dbReference>
<dbReference type="Gene3D" id="1.20.80.10">
    <property type="match status" value="1"/>
</dbReference>
<dbReference type="InterPro" id="IPR022408">
    <property type="entry name" value="Acyl-CoA-binding_prot_CS"/>
</dbReference>
<dbReference type="InterPro" id="IPR000582">
    <property type="entry name" value="Acyl-CoA-binding_protein"/>
</dbReference>
<dbReference type="InterPro" id="IPR035984">
    <property type="entry name" value="Acyl-CoA-binding_sf"/>
</dbReference>
<dbReference type="InterPro" id="IPR014352">
    <property type="entry name" value="FERM/acyl-CoA-bd_prot_sf"/>
</dbReference>
<dbReference type="PANTHER" id="PTHR23310:SF62">
    <property type="entry name" value="ACYL-COA BINDING PROTEIN 1, ISOFORM A"/>
    <property type="match status" value="1"/>
</dbReference>
<dbReference type="PANTHER" id="PTHR23310">
    <property type="entry name" value="ACYL-COA-BINDING PROTEIN, ACBP"/>
    <property type="match status" value="1"/>
</dbReference>
<dbReference type="Pfam" id="PF00887">
    <property type="entry name" value="ACBP"/>
    <property type="match status" value="1"/>
</dbReference>
<dbReference type="PRINTS" id="PR00689">
    <property type="entry name" value="ACOABINDINGP"/>
</dbReference>
<dbReference type="SUPFAM" id="SSF47027">
    <property type="entry name" value="Acyl-CoA binding protein"/>
    <property type="match status" value="1"/>
</dbReference>
<dbReference type="PROSITE" id="PS00880">
    <property type="entry name" value="ACB_1"/>
    <property type="match status" value="1"/>
</dbReference>
<dbReference type="PROSITE" id="PS51228">
    <property type="entry name" value="ACB_2"/>
    <property type="match status" value="1"/>
</dbReference>
<proteinExistence type="evidence at transcript level"/>
<comment type="function">
    <text evidence="3 4">Binds medium- and long-chain acyl-CoA esters with high affinity. Can interact in vitro with linolenoyl-CoA (PubMed:21128943). Binds phosphatidic acid (PA) and phosphatidylcholine (PC) in vitro. May play a role in the biosynthesis of phospholipids (PubMed:24738983).</text>
</comment>
<comment type="subcellular location">
    <subcellularLocation>
        <location evidence="4">Cytoplasm</location>
        <location evidence="4">Cytosol</location>
    </subcellularLocation>
</comment>
<comment type="tissue specificity">
    <text evidence="3">Highly expressed in leaves. Expressed at low levels in roots and seeds.</text>
</comment>
<comment type="induction">
    <text evidence="3">Down-regulated by cold stress, wounding and infection with the rice blast fungus Magnaporthe oryzae.</text>
</comment>
<comment type="similarity">
    <text evidence="6">Belongs to the ACBP family.</text>
</comment>
<comment type="sequence caution" evidence="6">
    <conflict type="erroneous gene model prediction">
        <sequence resource="EMBL-CDS" id="BAF12450"/>
    </conflict>
</comment>
<keyword id="KW-0963">Cytoplasm</keyword>
<keyword id="KW-0446">Lipid-binding</keyword>
<keyword id="KW-1185">Reference proteome</keyword>
<accession>Q75G87</accession>
<accession>Q0DQN8</accession>
<organism>
    <name type="scientific">Oryza sativa subsp. japonica</name>
    <name type="common">Rice</name>
    <dbReference type="NCBI Taxonomy" id="39947"/>
    <lineage>
        <taxon>Eukaryota</taxon>
        <taxon>Viridiplantae</taxon>
        <taxon>Streptophyta</taxon>
        <taxon>Embryophyta</taxon>
        <taxon>Tracheophyta</taxon>
        <taxon>Spermatophyta</taxon>
        <taxon>Magnoliopsida</taxon>
        <taxon>Liliopsida</taxon>
        <taxon>Poales</taxon>
        <taxon>Poaceae</taxon>
        <taxon>BOP clade</taxon>
        <taxon>Oryzoideae</taxon>
        <taxon>Oryzeae</taxon>
        <taxon>Oryzinae</taxon>
        <taxon>Oryza</taxon>
        <taxon>Oryza sativa</taxon>
    </lineage>
</organism>
<sequence length="155" mass="17668">MGLQEDFEEYAEKVKTLPESTSNEDKLILYGLYKQATVGDVNTSRPGIFAQRDRAKWDAWKAVEGKSKEEAMSDYITKVKQLQEEAAALKAVFRAYLVGEMNIFECHIGRLTRCRRGFRTQMKKQIVYSPGTREMNLLSLIKPSLAHVGYCSTYG</sequence>
<protein>
    <recommendedName>
        <fullName evidence="6">Acyl-CoA-binding domain-containing protein 3</fullName>
        <shortName evidence="5">Acyl-CoA binding protein 3</shortName>
        <shortName evidence="5">OsACBP3</shortName>
    </recommendedName>
</protein>
<feature type="chain" id="PRO_0000442033" description="Acyl-CoA-binding domain-containing protein 3">
    <location>
        <begin position="1"/>
        <end position="155"/>
    </location>
</feature>
<feature type="domain" description="ACB" evidence="2">
    <location>
        <begin position="3"/>
        <end position="88"/>
    </location>
</feature>
<feature type="binding site" evidence="1">
    <location>
        <position position="15"/>
    </location>
    <ligand>
        <name>an acyl-CoA</name>
        <dbReference type="ChEBI" id="CHEBI:58342"/>
    </ligand>
</feature>
<feature type="binding site" evidence="1">
    <location>
        <begin position="30"/>
        <end position="34"/>
    </location>
    <ligand>
        <name>an acyl-CoA</name>
        <dbReference type="ChEBI" id="CHEBI:58342"/>
    </ligand>
</feature>
<feature type="binding site" evidence="1">
    <location>
        <position position="56"/>
    </location>
    <ligand>
        <name>an acyl-CoA</name>
        <dbReference type="ChEBI" id="CHEBI:58342"/>
    </ligand>
</feature>
<feature type="binding site" evidence="1">
    <location>
        <position position="75"/>
    </location>
    <ligand>
        <name>an acyl-CoA</name>
        <dbReference type="ChEBI" id="CHEBI:58342"/>
    </ligand>
</feature>